<reference key="1">
    <citation type="journal article" date="1992" name="J. Bacteriol.">
        <title>Isolation and characterization of the nifUSVW-rpoN gene cluster from Rhodobacter sphaeroides.</title>
        <authorList>
            <person name="Meijer W.G."/>
            <person name="Tabita F.R."/>
        </authorList>
    </citation>
    <scope>NUCLEOTIDE SEQUENCE [GENOMIC DNA]</scope>
</reference>
<comment type="function">
    <text evidence="1">May be involved in the formation or repair of [Fe-S] clusters present in iron-sulfur proteins.</text>
</comment>
<comment type="similarity">
    <text evidence="1">Belongs to the NifU family.</text>
</comment>
<sequence length="246" mass="25402">MLDETGKALDLFFNPRNAGPLEAADAVGTAGSLEVGDAIRLMLRIEAGRVAEARFLAFGGAHAIACGSALTVLVTGLDLAAARAVTPEEIEAAVGGLPAPRRPAAARAWSALQIALAAYEGRTFVAPEPAPVPAPAAAPVRLLAPKHDSQPRIVRDVPLAPAEEARLIAEVIESVRPRLRADGGDVTLVAVEGSKVRVHLTGACSGCQLAALTLGGLQKRLADTLGRPIRVIPEEKRPLVSIAGAR</sequence>
<proteinExistence type="inferred from homology"/>
<name>NIFU_CERSP</name>
<organism>
    <name type="scientific">Cereibacter sphaeroides</name>
    <name type="common">Rhodobacter sphaeroides</name>
    <dbReference type="NCBI Taxonomy" id="1063"/>
    <lineage>
        <taxon>Bacteria</taxon>
        <taxon>Pseudomonadati</taxon>
        <taxon>Pseudomonadota</taxon>
        <taxon>Alphaproteobacteria</taxon>
        <taxon>Rhodobacterales</taxon>
        <taxon>Paracoccaceae</taxon>
        <taxon>Cereibacter</taxon>
    </lineage>
</organism>
<accession>Q01180</accession>
<protein>
    <recommendedName>
        <fullName>Nitrogen fixation protein NifU</fullName>
    </recommendedName>
</protein>
<dbReference type="EMBL" id="M86823">
    <property type="protein sequence ID" value="AAA26136.1"/>
    <property type="molecule type" value="Genomic_DNA"/>
</dbReference>
<dbReference type="PIR" id="B41880">
    <property type="entry name" value="B41880"/>
</dbReference>
<dbReference type="RefSeq" id="WP_011338299.1">
    <property type="nucleotide sequence ID" value="NZ_CP051468.1"/>
</dbReference>
<dbReference type="SMR" id="Q01180"/>
<dbReference type="GO" id="GO:0005506">
    <property type="term" value="F:iron ion binding"/>
    <property type="evidence" value="ECO:0007669"/>
    <property type="project" value="InterPro"/>
</dbReference>
<dbReference type="GO" id="GO:0051536">
    <property type="term" value="F:iron-sulfur cluster binding"/>
    <property type="evidence" value="ECO:0007669"/>
    <property type="project" value="InterPro"/>
</dbReference>
<dbReference type="GO" id="GO:0016226">
    <property type="term" value="P:iron-sulfur cluster assembly"/>
    <property type="evidence" value="ECO:0007669"/>
    <property type="project" value="InterPro"/>
</dbReference>
<dbReference type="GO" id="GO:0009399">
    <property type="term" value="P:nitrogen fixation"/>
    <property type="evidence" value="ECO:0007669"/>
    <property type="project" value="UniProtKB-KW"/>
</dbReference>
<dbReference type="Gene3D" id="3.90.1010.10">
    <property type="match status" value="1"/>
</dbReference>
<dbReference type="Gene3D" id="3.30.300.130">
    <property type="entry name" value="Fe-S cluster assembly (FSCA)"/>
    <property type="match status" value="1"/>
</dbReference>
<dbReference type="InterPro" id="IPR034904">
    <property type="entry name" value="FSCA_dom_sf"/>
</dbReference>
<dbReference type="InterPro" id="IPR001075">
    <property type="entry name" value="NIF_FeS_clus_asmbl_NifU_C"/>
</dbReference>
<dbReference type="InterPro" id="IPR002871">
    <property type="entry name" value="NIF_FeS_clus_asmbl_NifU_N"/>
</dbReference>
<dbReference type="PANTHER" id="PTHR10093">
    <property type="entry name" value="IRON-SULFUR CLUSTER ASSEMBLY ENZYME NIFU HOMOLOG"/>
    <property type="match status" value="1"/>
</dbReference>
<dbReference type="Pfam" id="PF01106">
    <property type="entry name" value="NifU"/>
    <property type="match status" value="1"/>
</dbReference>
<dbReference type="Pfam" id="PF01592">
    <property type="entry name" value="NifU_N"/>
    <property type="match status" value="1"/>
</dbReference>
<dbReference type="SUPFAM" id="SSF117916">
    <property type="entry name" value="Fe-S cluster assembly (FSCA) domain-like"/>
    <property type="match status" value="1"/>
</dbReference>
<dbReference type="SUPFAM" id="SSF82649">
    <property type="entry name" value="SufE/NifU"/>
    <property type="match status" value="1"/>
</dbReference>
<keyword id="KW-0535">Nitrogen fixation</keyword>
<feature type="chain" id="PRO_0000166178" description="Nitrogen fixation protein NifU">
    <location>
        <begin position="1"/>
        <end position="246"/>
    </location>
</feature>
<evidence type="ECO:0000305" key="1"/>
<gene>
    <name type="primary">nifU</name>
</gene>